<accession>Q65IA5</accession>
<accession>Q62TQ6</accession>
<dbReference type="EC" id="2.3.1.31" evidence="1"/>
<dbReference type="EMBL" id="CP000002">
    <property type="protein sequence ID" value="AAU23853.1"/>
    <property type="molecule type" value="Genomic_DNA"/>
</dbReference>
<dbReference type="EMBL" id="AE017333">
    <property type="protein sequence ID" value="AAU41209.1"/>
    <property type="molecule type" value="Genomic_DNA"/>
</dbReference>
<dbReference type="SMR" id="Q65IA5"/>
<dbReference type="STRING" id="279010.BL01365"/>
<dbReference type="KEGG" id="bld:BLi02329"/>
<dbReference type="KEGG" id="bli:BL01365"/>
<dbReference type="eggNOG" id="COG1897">
    <property type="taxonomic scope" value="Bacteria"/>
</dbReference>
<dbReference type="HOGENOM" id="CLU_057851_0_1_9"/>
<dbReference type="UniPathway" id="UPA00051">
    <property type="reaction ID" value="UER00074"/>
</dbReference>
<dbReference type="Proteomes" id="UP000000606">
    <property type="component" value="Chromosome"/>
</dbReference>
<dbReference type="GO" id="GO:0005737">
    <property type="term" value="C:cytoplasm"/>
    <property type="evidence" value="ECO:0007669"/>
    <property type="project" value="UniProtKB-SubCell"/>
</dbReference>
<dbReference type="GO" id="GO:0004414">
    <property type="term" value="F:homoserine O-acetyltransferase activity"/>
    <property type="evidence" value="ECO:0007669"/>
    <property type="project" value="UniProtKB-EC"/>
</dbReference>
<dbReference type="GO" id="GO:0008899">
    <property type="term" value="F:homoserine O-succinyltransferase activity"/>
    <property type="evidence" value="ECO:0007669"/>
    <property type="project" value="UniProtKB-UniRule"/>
</dbReference>
<dbReference type="GO" id="GO:0019281">
    <property type="term" value="P:L-methionine biosynthetic process from homoserine via O-succinyl-L-homoserine and cystathionine"/>
    <property type="evidence" value="ECO:0007669"/>
    <property type="project" value="InterPro"/>
</dbReference>
<dbReference type="CDD" id="cd03131">
    <property type="entry name" value="GATase1_HTS"/>
    <property type="match status" value="1"/>
</dbReference>
<dbReference type="FunFam" id="3.40.50.880:FF:000004">
    <property type="entry name" value="Homoserine O-succinyltransferase"/>
    <property type="match status" value="1"/>
</dbReference>
<dbReference type="Gene3D" id="3.40.50.880">
    <property type="match status" value="1"/>
</dbReference>
<dbReference type="HAMAP" id="MF_00295">
    <property type="entry name" value="MetA_acyltransf"/>
    <property type="match status" value="1"/>
</dbReference>
<dbReference type="InterPro" id="IPR029062">
    <property type="entry name" value="Class_I_gatase-like"/>
</dbReference>
<dbReference type="InterPro" id="IPR005697">
    <property type="entry name" value="HST_MetA"/>
</dbReference>
<dbReference type="InterPro" id="IPR033752">
    <property type="entry name" value="MetA_family"/>
</dbReference>
<dbReference type="NCBIfam" id="TIGR01001">
    <property type="entry name" value="metA"/>
    <property type="match status" value="1"/>
</dbReference>
<dbReference type="PANTHER" id="PTHR20919">
    <property type="entry name" value="HOMOSERINE O-SUCCINYLTRANSFERASE"/>
    <property type="match status" value="1"/>
</dbReference>
<dbReference type="PANTHER" id="PTHR20919:SF0">
    <property type="entry name" value="HOMOSERINE O-SUCCINYLTRANSFERASE"/>
    <property type="match status" value="1"/>
</dbReference>
<dbReference type="Pfam" id="PF04204">
    <property type="entry name" value="HTS"/>
    <property type="match status" value="1"/>
</dbReference>
<dbReference type="PIRSF" id="PIRSF000450">
    <property type="entry name" value="H_ser_succinyltr"/>
    <property type="match status" value="1"/>
</dbReference>
<dbReference type="SUPFAM" id="SSF52317">
    <property type="entry name" value="Class I glutamine amidotransferase-like"/>
    <property type="match status" value="1"/>
</dbReference>
<name>METAA_BACLD</name>
<protein>
    <recommendedName>
        <fullName evidence="1">Homoserine O-acetyltransferase</fullName>
        <shortName evidence="1">HAT</shortName>
        <ecNumber evidence="1">2.3.1.31</ecNumber>
    </recommendedName>
    <alternativeName>
        <fullName evidence="1">Homoserine transacetylase</fullName>
        <shortName evidence="1">HTA</shortName>
    </alternativeName>
</protein>
<gene>
    <name evidence="1" type="primary">metAA</name>
    <name type="ordered locus">BLi02329</name>
    <name type="ordered locus">BL01365</name>
</gene>
<proteinExistence type="inferred from homology"/>
<sequence>MPINIPINLPAKQILESENIFVMDEKRAFHQDIRPLNIVILNLMPQKIKTETQLLRMLGNSPLQVYFTFLIPSTHTPKHTPRQHLEQFYTTFSSIRDRKFDGMIITGAPIEHLEYEEVSYWEELREILDWSKTHVTSTLHICWGAQAGLYHHYGIRKVKLPKKTFGVFEHRIMEKNERLVRGFEEFYYVPHSRHTDINMDDLKAVSHLKVLSISDEAGVCLIASKDEKQVFLTGHPEYDTDTLKEEYERDLARNMEIDPPVNYFKEGPDGAVPVNRWKAHATLLFMNWLNYYVYQETPYEWK</sequence>
<keyword id="KW-0012">Acyltransferase</keyword>
<keyword id="KW-0028">Amino-acid biosynthesis</keyword>
<keyword id="KW-0963">Cytoplasm</keyword>
<keyword id="KW-0486">Methionine biosynthesis</keyword>
<keyword id="KW-1185">Reference proteome</keyword>
<keyword id="KW-0808">Transferase</keyword>
<feature type="chain" id="PRO_1000021800" description="Homoserine O-acetyltransferase">
    <location>
        <begin position="1"/>
        <end position="302"/>
    </location>
</feature>
<feature type="active site" description="Acyl-thioester intermediate" evidence="1">
    <location>
        <position position="142"/>
    </location>
</feature>
<feature type="active site" description="Proton acceptor" evidence="1">
    <location>
        <position position="235"/>
    </location>
</feature>
<feature type="active site" evidence="1">
    <location>
        <position position="237"/>
    </location>
</feature>
<feature type="binding site" evidence="1">
    <location>
        <position position="163"/>
    </location>
    <ligand>
        <name>substrate</name>
    </ligand>
</feature>
<feature type="binding site" evidence="1">
    <location>
        <position position="192"/>
    </location>
    <ligand>
        <name>substrate</name>
    </ligand>
</feature>
<feature type="binding site" evidence="1">
    <location>
        <position position="249"/>
    </location>
    <ligand>
        <name>substrate</name>
    </ligand>
</feature>
<feature type="site" description="Important for acyl-CoA specificity" evidence="1">
    <location>
        <position position="111"/>
    </location>
</feature>
<feature type="site" description="Important for substrate specificity" evidence="1">
    <location>
        <position position="192"/>
    </location>
</feature>
<comment type="function">
    <text evidence="1">Transfers an acetyl group from acetyl-CoA to L-homoserine, forming acetyl-L-homoserine.</text>
</comment>
<comment type="catalytic activity">
    <reaction evidence="1">
        <text>L-homoserine + acetyl-CoA = O-acetyl-L-homoserine + CoA</text>
        <dbReference type="Rhea" id="RHEA:13701"/>
        <dbReference type="ChEBI" id="CHEBI:57287"/>
        <dbReference type="ChEBI" id="CHEBI:57288"/>
        <dbReference type="ChEBI" id="CHEBI:57476"/>
        <dbReference type="ChEBI" id="CHEBI:57716"/>
        <dbReference type="EC" id="2.3.1.31"/>
    </reaction>
</comment>
<comment type="pathway">
    <text evidence="1">Amino-acid biosynthesis; L-methionine biosynthesis via de novo pathway; O-acetyl-L-homoserine from L-homoserine: step 1/1.</text>
</comment>
<comment type="subcellular location">
    <subcellularLocation>
        <location evidence="1">Cytoplasm</location>
    </subcellularLocation>
</comment>
<comment type="similarity">
    <text evidence="1">Belongs to the MetA family.</text>
</comment>
<reference key="1">
    <citation type="journal article" date="2004" name="J. Mol. Microbiol. Biotechnol.">
        <title>The complete genome sequence of Bacillus licheniformis DSM13, an organism with great industrial potential.</title>
        <authorList>
            <person name="Veith B."/>
            <person name="Herzberg C."/>
            <person name="Steckel S."/>
            <person name="Feesche J."/>
            <person name="Maurer K.H."/>
            <person name="Ehrenreich P."/>
            <person name="Baeumer S."/>
            <person name="Henne A."/>
            <person name="Liesegang H."/>
            <person name="Merkl R."/>
            <person name="Ehrenreich A."/>
            <person name="Gottschalk G."/>
        </authorList>
    </citation>
    <scope>NUCLEOTIDE SEQUENCE [LARGE SCALE GENOMIC DNA]</scope>
    <source>
        <strain>ATCC 14580 / DSM 13 / JCM 2505 / CCUG 7422 / NBRC 12200 / NCIMB 9375 / NCTC 10341 / NRRL NRS-1264 / Gibson 46</strain>
    </source>
</reference>
<reference key="2">
    <citation type="journal article" date="2004" name="Genome Biol.">
        <title>Complete genome sequence of the industrial bacterium Bacillus licheniformis and comparisons with closely related Bacillus species.</title>
        <authorList>
            <person name="Rey M.W."/>
            <person name="Ramaiya P."/>
            <person name="Nelson B.A."/>
            <person name="Brody-Karpin S.D."/>
            <person name="Zaretsky E.J."/>
            <person name="Tang M."/>
            <person name="Lopez de Leon A."/>
            <person name="Xiang H."/>
            <person name="Gusti V."/>
            <person name="Clausen I.G."/>
            <person name="Olsen P.B."/>
            <person name="Rasmussen M.D."/>
            <person name="Andersen J.T."/>
            <person name="Joergensen P.L."/>
            <person name="Larsen T.S."/>
            <person name="Sorokin A."/>
            <person name="Bolotin A."/>
            <person name="Lapidus A."/>
            <person name="Galleron N."/>
            <person name="Ehrlich S.D."/>
            <person name="Berka R.M."/>
        </authorList>
    </citation>
    <scope>NUCLEOTIDE SEQUENCE [LARGE SCALE GENOMIC DNA]</scope>
    <source>
        <strain>ATCC 14580 / DSM 13 / JCM 2505 / CCUG 7422 / NBRC 12200 / NCIMB 9375 / NCTC 10341 / NRRL NRS-1264 / Gibson 46</strain>
    </source>
</reference>
<evidence type="ECO:0000255" key="1">
    <source>
        <dbReference type="HAMAP-Rule" id="MF_00295"/>
    </source>
</evidence>
<organism>
    <name type="scientific">Bacillus licheniformis (strain ATCC 14580 / DSM 13 / JCM 2505 / CCUG 7422 / NBRC 12200 / NCIMB 9375 / NCTC 10341 / NRRL NRS-1264 / Gibson 46)</name>
    <dbReference type="NCBI Taxonomy" id="279010"/>
    <lineage>
        <taxon>Bacteria</taxon>
        <taxon>Bacillati</taxon>
        <taxon>Bacillota</taxon>
        <taxon>Bacilli</taxon>
        <taxon>Bacillales</taxon>
        <taxon>Bacillaceae</taxon>
        <taxon>Bacillus</taxon>
    </lineage>
</organism>